<comment type="function">
    <text evidence="1">Catalyzes the dehydration of inosose (2-keto-myo-inositol, 2KMI or 2,4,6/3,5-pentahydroxycyclohexanone) to 3D-(3,5/4)-trihydroxycyclohexane-1,2-dione (D-2,3-diketo-4-deoxy-epi-inositol).</text>
</comment>
<comment type="catalytic activity">
    <reaction evidence="1">
        <text>scyllo-inosose = 3D-3,5/4-trihydroxycyclohexane-1,2-dione + H2O</text>
        <dbReference type="Rhea" id="RHEA:14065"/>
        <dbReference type="ChEBI" id="CHEBI:15377"/>
        <dbReference type="ChEBI" id="CHEBI:17811"/>
        <dbReference type="ChEBI" id="CHEBI:28446"/>
        <dbReference type="EC" id="4.2.1.44"/>
    </reaction>
</comment>
<comment type="cofactor">
    <cofactor evidence="1">
        <name>glutathione</name>
        <dbReference type="ChEBI" id="CHEBI:57925"/>
    </cofactor>
</comment>
<comment type="cofactor">
    <cofactor evidence="1">
        <name>Co(2+)</name>
        <dbReference type="ChEBI" id="CHEBI:48828"/>
    </cofactor>
    <cofactor evidence="1">
        <name>Mn(2+)</name>
        <dbReference type="ChEBI" id="CHEBI:29035"/>
    </cofactor>
</comment>
<comment type="pathway">
    <text evidence="1">Polyol metabolism; myo-inositol degradation into acetyl-CoA; acetyl-CoA from myo-inositol: step 2/7.</text>
</comment>
<comment type="similarity">
    <text evidence="1">Belongs to the IolE/MocC family.</text>
</comment>
<gene>
    <name evidence="1" type="primary">iolE</name>
    <name type="ordered locus">BALH_2261</name>
</gene>
<accession>A0REB7</accession>
<dbReference type="EC" id="4.2.1.44" evidence="1"/>
<dbReference type="EMBL" id="CP000485">
    <property type="protein sequence ID" value="ABK85560.1"/>
    <property type="molecule type" value="Genomic_DNA"/>
</dbReference>
<dbReference type="RefSeq" id="WP_000471988.1">
    <property type="nucleotide sequence ID" value="NC_008600.1"/>
</dbReference>
<dbReference type="SMR" id="A0REB7"/>
<dbReference type="KEGG" id="btl:BALH_2261"/>
<dbReference type="HOGENOM" id="CLU_059523_0_0_9"/>
<dbReference type="UniPathway" id="UPA00076">
    <property type="reaction ID" value="UER00144"/>
</dbReference>
<dbReference type="GO" id="GO:0030145">
    <property type="term" value="F:manganese ion binding"/>
    <property type="evidence" value="ECO:0007669"/>
    <property type="project" value="UniProtKB-UniRule"/>
</dbReference>
<dbReference type="GO" id="GO:0050114">
    <property type="term" value="F:myo-inosose-2 dehydratase activity"/>
    <property type="evidence" value="ECO:0007669"/>
    <property type="project" value="UniProtKB-UniRule"/>
</dbReference>
<dbReference type="GO" id="GO:0019310">
    <property type="term" value="P:inositol catabolic process"/>
    <property type="evidence" value="ECO:0007669"/>
    <property type="project" value="UniProtKB-UniRule"/>
</dbReference>
<dbReference type="Gene3D" id="3.20.20.150">
    <property type="entry name" value="Divalent-metal-dependent TIM barrel enzymes"/>
    <property type="match status" value="1"/>
</dbReference>
<dbReference type="HAMAP" id="MF_01672">
    <property type="entry name" value="IolE"/>
    <property type="match status" value="1"/>
</dbReference>
<dbReference type="InterPro" id="IPR023952">
    <property type="entry name" value="IolE"/>
</dbReference>
<dbReference type="InterPro" id="IPR030823">
    <property type="entry name" value="IolE/MocC"/>
</dbReference>
<dbReference type="InterPro" id="IPR050312">
    <property type="entry name" value="IolE/XylAMocC-like"/>
</dbReference>
<dbReference type="InterPro" id="IPR036237">
    <property type="entry name" value="Xyl_isomerase-like_sf"/>
</dbReference>
<dbReference type="InterPro" id="IPR013022">
    <property type="entry name" value="Xyl_isomerase-like_TIM-brl"/>
</dbReference>
<dbReference type="NCBIfam" id="TIGR04379">
    <property type="entry name" value="myo_inos_iolE"/>
    <property type="match status" value="1"/>
</dbReference>
<dbReference type="PANTHER" id="PTHR12110">
    <property type="entry name" value="HYDROXYPYRUVATE ISOMERASE"/>
    <property type="match status" value="1"/>
</dbReference>
<dbReference type="PANTHER" id="PTHR12110:SF41">
    <property type="entry name" value="INOSOSE DEHYDRATASE"/>
    <property type="match status" value="1"/>
</dbReference>
<dbReference type="Pfam" id="PF01261">
    <property type="entry name" value="AP_endonuc_2"/>
    <property type="match status" value="1"/>
</dbReference>
<dbReference type="SUPFAM" id="SSF51658">
    <property type="entry name" value="Xylose isomerase-like"/>
    <property type="match status" value="1"/>
</dbReference>
<proteinExistence type="inferred from homology"/>
<feature type="chain" id="PRO_0000352359" description="Inosose dehydratase">
    <location>
        <begin position="1"/>
        <end position="298"/>
    </location>
</feature>
<evidence type="ECO:0000255" key="1">
    <source>
        <dbReference type="HAMAP-Rule" id="MF_01672"/>
    </source>
</evidence>
<sequence length="298" mass="33639">MFKENTIKLGIAPIAWTNDDMPELGAENTFEQCISEMALAGFNGSEVGNKYPRNTVVLKKSLELRNLEIASAWFSTFLTTKPLEETVEEFIKHRDFLHDMGAKVIVVSEQGHSIQGLMDVPLFKNKPVFTEEEWNKLADGLHHLGKLAQEKGLHIVYHHHMGTGVQTTAEIEKLMDITDSALVSLLFDTGHLVFSGEEPLYILKKYLPRIKHVHLKDIRQEVVDIVKENELSFLQAVKNGAFTVPGDGVIEFDEVFTILANSDYQGWFVVEAEQDPALANPFEYALKAREFIREKAGL</sequence>
<organism>
    <name type="scientific">Bacillus thuringiensis (strain Al Hakam)</name>
    <dbReference type="NCBI Taxonomy" id="412694"/>
    <lineage>
        <taxon>Bacteria</taxon>
        <taxon>Bacillati</taxon>
        <taxon>Bacillota</taxon>
        <taxon>Bacilli</taxon>
        <taxon>Bacillales</taxon>
        <taxon>Bacillaceae</taxon>
        <taxon>Bacillus</taxon>
        <taxon>Bacillus cereus group</taxon>
    </lineage>
</organism>
<keyword id="KW-0170">Cobalt</keyword>
<keyword id="KW-0456">Lyase</keyword>
<keyword id="KW-0464">Manganese</keyword>
<reference key="1">
    <citation type="journal article" date="2007" name="J. Bacteriol.">
        <title>The complete genome sequence of Bacillus thuringiensis Al Hakam.</title>
        <authorList>
            <person name="Challacombe J.F."/>
            <person name="Altherr M.R."/>
            <person name="Xie G."/>
            <person name="Bhotika S.S."/>
            <person name="Brown N."/>
            <person name="Bruce D."/>
            <person name="Campbell C.S."/>
            <person name="Campbell M.L."/>
            <person name="Chen J."/>
            <person name="Chertkov O."/>
            <person name="Cleland C."/>
            <person name="Dimitrijevic M."/>
            <person name="Doggett N.A."/>
            <person name="Fawcett J.J."/>
            <person name="Glavina T."/>
            <person name="Goodwin L.A."/>
            <person name="Green L.D."/>
            <person name="Han C.S."/>
            <person name="Hill K.K."/>
            <person name="Hitchcock P."/>
            <person name="Jackson P.J."/>
            <person name="Keim P."/>
            <person name="Kewalramani A.R."/>
            <person name="Longmire J."/>
            <person name="Lucas S."/>
            <person name="Malfatti S."/>
            <person name="Martinez D."/>
            <person name="McMurry K."/>
            <person name="Meincke L.J."/>
            <person name="Misra M."/>
            <person name="Moseman B.L."/>
            <person name="Mundt M."/>
            <person name="Munk A.C."/>
            <person name="Okinaka R.T."/>
            <person name="Parson-Quintana B."/>
            <person name="Reilly L.P."/>
            <person name="Richardson P."/>
            <person name="Robinson D.L."/>
            <person name="Saunders E."/>
            <person name="Tapia R."/>
            <person name="Tesmer J.G."/>
            <person name="Thayer N."/>
            <person name="Thompson L.S."/>
            <person name="Tice H."/>
            <person name="Ticknor L.O."/>
            <person name="Wills P.L."/>
            <person name="Gilna P."/>
            <person name="Brettin T.S."/>
        </authorList>
    </citation>
    <scope>NUCLEOTIDE SEQUENCE [LARGE SCALE GENOMIC DNA]</scope>
    <source>
        <strain>Al Hakam</strain>
    </source>
</reference>
<protein>
    <recommendedName>
        <fullName evidence="1">Inosose dehydratase</fullName>
        <ecNumber evidence="1">4.2.1.44</ecNumber>
    </recommendedName>
    <alternativeName>
        <fullName evidence="1">2-keto-myo-inositol dehydratase</fullName>
        <shortName evidence="1">2KMI dehydratase</shortName>
    </alternativeName>
</protein>
<name>IOLE_BACAH</name>